<feature type="chain" id="PRO_0000087681" description="Omega-filistatoxin-Kh1a">
    <location>
        <begin position="1"/>
        <end position="74"/>
    </location>
</feature>
<keyword id="KW-0108">Calcium channel impairing toxin</keyword>
<keyword id="KW-0903">Direct protein sequencing</keyword>
<keyword id="KW-1015">Disulfide bond</keyword>
<keyword id="KW-0872">Ion channel impairing toxin</keyword>
<keyword id="KW-0528">Neurotoxin</keyword>
<keyword id="KW-0964">Secreted</keyword>
<keyword id="KW-0800">Toxin</keyword>
<keyword id="KW-1218">Voltage-gated calcium channel impairing toxin</keyword>
<protein>
    <recommendedName>
        <fullName>Omega-filistatoxin-Kh1a</fullName>
        <shortName>Omega-FLTX-Kh1a</shortName>
    </recommendedName>
    <alternativeName>
        <fullName>Toxin DW13.3</fullName>
    </alternativeName>
</protein>
<dbReference type="ArachnoServer" id="AS000211">
    <property type="toxin name" value="omega-filistatoxin-Kh1a"/>
</dbReference>
<dbReference type="GO" id="GO:0005576">
    <property type="term" value="C:extracellular region"/>
    <property type="evidence" value="ECO:0007669"/>
    <property type="project" value="UniProtKB-SubCell"/>
</dbReference>
<dbReference type="GO" id="GO:0005246">
    <property type="term" value="F:calcium channel regulator activity"/>
    <property type="evidence" value="ECO:0007669"/>
    <property type="project" value="UniProtKB-KW"/>
</dbReference>
<dbReference type="GO" id="GO:0090729">
    <property type="term" value="F:toxin activity"/>
    <property type="evidence" value="ECO:0007669"/>
    <property type="project" value="UniProtKB-KW"/>
</dbReference>
<sequence>AECLMIGDTSCVPRLGRRCCYGAWCYCDQQLSCRRVGRKRECGWVEVNCKCGWSWSQRIDDWRADYSCKCPEDQ</sequence>
<organism>
    <name type="scientific">Kukulcania hibernalis</name>
    <name type="common">Southern house spider</name>
    <name type="synonym">Filistata hibernalis</name>
    <dbReference type="NCBI Taxonomy" id="268415"/>
    <lineage>
        <taxon>Eukaryota</taxon>
        <taxon>Metazoa</taxon>
        <taxon>Ecdysozoa</taxon>
        <taxon>Arthropoda</taxon>
        <taxon>Chelicerata</taxon>
        <taxon>Arachnida</taxon>
        <taxon>Araneae</taxon>
        <taxon>Araneomorphae</taxon>
        <taxon>Haplogynae</taxon>
        <taxon>Filistatoidea</taxon>
        <taxon>Filistatidae</taxon>
        <taxon>Kukulcania</taxon>
    </lineage>
</organism>
<name>TX13_KUKHI</name>
<evidence type="ECO:0000269" key="1">
    <source>
    </source>
</evidence>
<evidence type="ECO:0000305" key="2"/>
<accession>P60979</accession>
<comment type="function">
    <text evidence="1">Potently blocks vertebrate calcium channels Cav1 and Cav2. Is the most active on Cav2.2/CACNA1B (from HEK) (IC(50)=2.3 nM), followed by Cav2.1/CACNA1A (IC(50)=4.3 nM), Cav2.2/CACNA1B (from oocyte) (IC(50)=14.4 nM), Cav1.2/CACNA1C (IC(50)=26.8 nM), and Cav2.3/CACNA1E (IC(50)=96.4 nM).</text>
</comment>
<comment type="subcellular location">
    <subcellularLocation>
        <location>Secreted</location>
    </subcellularLocation>
</comment>
<comment type="tissue specificity">
    <text>Expressed by the venom gland.</text>
</comment>
<comment type="PTM">
    <text evidence="2">Contains 6 disulfide bonds.</text>
</comment>
<comment type="mass spectrometry"/>
<reference key="1">
    <citation type="journal article" date="1998" name="Mol. Pharmacol.">
        <title>Inhibition of neuronal calcium channels by a novel peptide spider toxin, DW13.3.</title>
        <authorList>
            <person name="Sutton K.G."/>
            <person name="Siok C."/>
            <person name="Stea A."/>
            <person name="Zamponi G.W."/>
            <person name="Heck S.D."/>
            <person name="Volkmann R.A."/>
            <person name="Ahlijanian M.K."/>
            <person name="Snutch T.P."/>
        </authorList>
    </citation>
    <scope>PROTEIN SEQUENCE</scope>
    <scope>MASS SPECTROMETRY</scope>
    <scope>FUNCTION</scope>
    <source>
        <tissue>Venom</tissue>
    </source>
</reference>
<proteinExistence type="evidence at protein level"/>